<dbReference type="EC" id="7.1.1.-" evidence="2"/>
<dbReference type="EMBL" id="CP000356">
    <property type="protein sequence ID" value="ABF53024.1"/>
    <property type="molecule type" value="Genomic_DNA"/>
</dbReference>
<dbReference type="SMR" id="Q1GTJ8"/>
<dbReference type="STRING" id="317655.Sala_1310"/>
<dbReference type="KEGG" id="sal:Sala_1310"/>
<dbReference type="eggNOG" id="COG0377">
    <property type="taxonomic scope" value="Bacteria"/>
</dbReference>
<dbReference type="HOGENOM" id="CLU_055737_7_0_5"/>
<dbReference type="Proteomes" id="UP000006578">
    <property type="component" value="Chromosome"/>
</dbReference>
<dbReference type="GO" id="GO:0005886">
    <property type="term" value="C:plasma membrane"/>
    <property type="evidence" value="ECO:0007669"/>
    <property type="project" value="UniProtKB-SubCell"/>
</dbReference>
<dbReference type="GO" id="GO:0045271">
    <property type="term" value="C:respiratory chain complex I"/>
    <property type="evidence" value="ECO:0007669"/>
    <property type="project" value="TreeGrafter"/>
</dbReference>
<dbReference type="GO" id="GO:0051539">
    <property type="term" value="F:4 iron, 4 sulfur cluster binding"/>
    <property type="evidence" value="ECO:0007669"/>
    <property type="project" value="UniProtKB-KW"/>
</dbReference>
<dbReference type="GO" id="GO:0005506">
    <property type="term" value="F:iron ion binding"/>
    <property type="evidence" value="ECO:0007669"/>
    <property type="project" value="UniProtKB-UniRule"/>
</dbReference>
<dbReference type="GO" id="GO:0008137">
    <property type="term" value="F:NADH dehydrogenase (ubiquinone) activity"/>
    <property type="evidence" value="ECO:0007669"/>
    <property type="project" value="InterPro"/>
</dbReference>
<dbReference type="GO" id="GO:0050136">
    <property type="term" value="F:NADH:ubiquinone reductase (non-electrogenic) activity"/>
    <property type="evidence" value="ECO:0007669"/>
    <property type="project" value="UniProtKB-UniRule"/>
</dbReference>
<dbReference type="GO" id="GO:0048038">
    <property type="term" value="F:quinone binding"/>
    <property type="evidence" value="ECO:0007669"/>
    <property type="project" value="UniProtKB-KW"/>
</dbReference>
<dbReference type="GO" id="GO:0009060">
    <property type="term" value="P:aerobic respiration"/>
    <property type="evidence" value="ECO:0007669"/>
    <property type="project" value="TreeGrafter"/>
</dbReference>
<dbReference type="GO" id="GO:0015990">
    <property type="term" value="P:electron transport coupled proton transport"/>
    <property type="evidence" value="ECO:0007669"/>
    <property type="project" value="TreeGrafter"/>
</dbReference>
<dbReference type="FunFam" id="3.40.50.12280:FF:000001">
    <property type="entry name" value="NADH-quinone oxidoreductase subunit B 2"/>
    <property type="match status" value="1"/>
</dbReference>
<dbReference type="Gene3D" id="3.40.50.12280">
    <property type="match status" value="1"/>
</dbReference>
<dbReference type="HAMAP" id="MF_01356">
    <property type="entry name" value="NDH1_NuoB"/>
    <property type="match status" value="1"/>
</dbReference>
<dbReference type="InterPro" id="IPR006137">
    <property type="entry name" value="NADH_UbQ_OxRdtase-like_20kDa"/>
</dbReference>
<dbReference type="InterPro" id="IPR006138">
    <property type="entry name" value="NADH_UQ_OxRdtase_20Kd_su"/>
</dbReference>
<dbReference type="NCBIfam" id="TIGR01957">
    <property type="entry name" value="nuoB_fam"/>
    <property type="match status" value="1"/>
</dbReference>
<dbReference type="NCBIfam" id="NF005012">
    <property type="entry name" value="PRK06411.1"/>
    <property type="match status" value="1"/>
</dbReference>
<dbReference type="PANTHER" id="PTHR11995">
    <property type="entry name" value="NADH DEHYDROGENASE"/>
    <property type="match status" value="1"/>
</dbReference>
<dbReference type="PANTHER" id="PTHR11995:SF14">
    <property type="entry name" value="NADH DEHYDROGENASE [UBIQUINONE] IRON-SULFUR PROTEIN 7, MITOCHONDRIAL"/>
    <property type="match status" value="1"/>
</dbReference>
<dbReference type="Pfam" id="PF01058">
    <property type="entry name" value="Oxidored_q6"/>
    <property type="match status" value="1"/>
</dbReference>
<dbReference type="SUPFAM" id="SSF56770">
    <property type="entry name" value="HydA/Nqo6-like"/>
    <property type="match status" value="1"/>
</dbReference>
<dbReference type="PROSITE" id="PS01150">
    <property type="entry name" value="COMPLEX1_20K"/>
    <property type="match status" value="1"/>
</dbReference>
<evidence type="ECO:0000250" key="1"/>
<evidence type="ECO:0000255" key="2">
    <source>
        <dbReference type="HAMAP-Rule" id="MF_01356"/>
    </source>
</evidence>
<proteinExistence type="inferred from homology"/>
<name>NUOB_SPHAL</name>
<protein>
    <recommendedName>
        <fullName evidence="2">NADH-quinone oxidoreductase subunit B</fullName>
        <ecNumber evidence="2">7.1.1.-</ecNumber>
    </recommendedName>
    <alternativeName>
        <fullName evidence="2">NADH dehydrogenase I subunit B</fullName>
    </alternativeName>
    <alternativeName>
        <fullName evidence="2">NDH-1 subunit B</fullName>
    </alternativeName>
</protein>
<organism>
    <name type="scientific">Sphingopyxis alaskensis (strain DSM 13593 / LMG 18877 / RB2256)</name>
    <name type="common">Sphingomonas alaskensis</name>
    <dbReference type="NCBI Taxonomy" id="317655"/>
    <lineage>
        <taxon>Bacteria</taxon>
        <taxon>Pseudomonadati</taxon>
        <taxon>Pseudomonadota</taxon>
        <taxon>Alphaproteobacteria</taxon>
        <taxon>Sphingomonadales</taxon>
        <taxon>Sphingomonadaceae</taxon>
        <taxon>Sphingopyxis</taxon>
    </lineage>
</organism>
<accession>Q1GTJ8</accession>
<feature type="chain" id="PRO_0000358483" description="NADH-quinone oxidoreductase subunit B">
    <location>
        <begin position="1"/>
        <end position="177"/>
    </location>
</feature>
<feature type="binding site" evidence="2">
    <location>
        <position position="56"/>
    </location>
    <ligand>
        <name>[4Fe-4S] cluster</name>
        <dbReference type="ChEBI" id="CHEBI:49883"/>
    </ligand>
</feature>
<feature type="binding site" evidence="2">
    <location>
        <position position="57"/>
    </location>
    <ligand>
        <name>[4Fe-4S] cluster</name>
        <dbReference type="ChEBI" id="CHEBI:49883"/>
    </ligand>
</feature>
<feature type="binding site" evidence="2">
    <location>
        <position position="121"/>
    </location>
    <ligand>
        <name>[4Fe-4S] cluster</name>
        <dbReference type="ChEBI" id="CHEBI:49883"/>
    </ligand>
</feature>
<feature type="binding site" evidence="2">
    <location>
        <position position="151"/>
    </location>
    <ligand>
        <name>[4Fe-4S] cluster</name>
        <dbReference type="ChEBI" id="CHEBI:49883"/>
    </ligand>
</feature>
<reference key="1">
    <citation type="journal article" date="2009" name="Proc. Natl. Acad. Sci. U.S.A.">
        <title>The genomic basis of trophic strategy in marine bacteria.</title>
        <authorList>
            <person name="Lauro F.M."/>
            <person name="McDougald D."/>
            <person name="Thomas T."/>
            <person name="Williams T.J."/>
            <person name="Egan S."/>
            <person name="Rice S."/>
            <person name="DeMaere M.Z."/>
            <person name="Ting L."/>
            <person name="Ertan H."/>
            <person name="Johnson J."/>
            <person name="Ferriera S."/>
            <person name="Lapidus A."/>
            <person name="Anderson I."/>
            <person name="Kyrpides N."/>
            <person name="Munk A.C."/>
            <person name="Detter C."/>
            <person name="Han C.S."/>
            <person name="Brown M.V."/>
            <person name="Robb F.T."/>
            <person name="Kjelleberg S."/>
            <person name="Cavicchioli R."/>
        </authorList>
    </citation>
    <scope>NUCLEOTIDE SEQUENCE [LARGE SCALE GENOMIC DNA]</scope>
    <source>
        <strain>DSM 13593 / LMG 18877 / RB2256</strain>
    </source>
</reference>
<keyword id="KW-0004">4Fe-4S</keyword>
<keyword id="KW-0997">Cell inner membrane</keyword>
<keyword id="KW-1003">Cell membrane</keyword>
<keyword id="KW-0408">Iron</keyword>
<keyword id="KW-0411">Iron-sulfur</keyword>
<keyword id="KW-0472">Membrane</keyword>
<keyword id="KW-0479">Metal-binding</keyword>
<keyword id="KW-0520">NAD</keyword>
<keyword id="KW-0874">Quinone</keyword>
<keyword id="KW-1185">Reference proteome</keyword>
<keyword id="KW-1278">Translocase</keyword>
<keyword id="KW-0813">Transport</keyword>
<keyword id="KW-0830">Ubiquinone</keyword>
<gene>
    <name evidence="2" type="primary">nuoB</name>
    <name type="ordered locus">Sala_1310</name>
</gene>
<sequence length="177" mass="19650">MPGQMPVAPGTNPDQSFFDDLSGEVGDKGFLVTSTEDLFNWARTGSLWWMTFGLACCAVEMIHVNMPRYDMERFGVAPRASPRQSDVMIVAGTLCNKMAPALRRVYDQMSNPKYVISMGSCANGGGYYHYSYSVVRGCDRIVPVDIYVPGCPPTAEALLYGVMQLQRKIRRTGTIER</sequence>
<comment type="function">
    <text evidence="1">NDH-1 shuttles electrons from NADH, via FMN and iron-sulfur (Fe-S) centers, to quinones in the respiratory chain. Couples the redox reaction to proton translocation (for every two electrons transferred, four hydrogen ions are translocated across the cytoplasmic membrane), and thus conserves the redox energy in a proton gradient (By similarity).</text>
</comment>
<comment type="catalytic activity">
    <reaction evidence="2">
        <text>a quinone + NADH + 5 H(+)(in) = a quinol + NAD(+) + 4 H(+)(out)</text>
        <dbReference type="Rhea" id="RHEA:57888"/>
        <dbReference type="ChEBI" id="CHEBI:15378"/>
        <dbReference type="ChEBI" id="CHEBI:24646"/>
        <dbReference type="ChEBI" id="CHEBI:57540"/>
        <dbReference type="ChEBI" id="CHEBI:57945"/>
        <dbReference type="ChEBI" id="CHEBI:132124"/>
    </reaction>
</comment>
<comment type="cofactor">
    <cofactor evidence="2">
        <name>[4Fe-4S] cluster</name>
        <dbReference type="ChEBI" id="CHEBI:49883"/>
    </cofactor>
    <text evidence="2">Binds 1 [4Fe-4S] cluster.</text>
</comment>
<comment type="subunit">
    <text evidence="2">NDH-1 is composed of 14 different subunits. Subunits NuoB, C, D, E, F, and G constitute the peripheral sector of the complex.</text>
</comment>
<comment type="subcellular location">
    <subcellularLocation>
        <location evidence="2">Cell inner membrane</location>
        <topology evidence="2">Peripheral membrane protein</topology>
        <orientation evidence="2">Cytoplasmic side</orientation>
    </subcellularLocation>
</comment>
<comment type="similarity">
    <text evidence="2">Belongs to the complex I 20 kDa subunit family.</text>
</comment>